<organism>
    <name type="scientific">Streptococcus pneumoniae (strain ATCC BAA-255 / R6)</name>
    <dbReference type="NCBI Taxonomy" id="171101"/>
    <lineage>
        <taxon>Bacteria</taxon>
        <taxon>Bacillati</taxon>
        <taxon>Bacillota</taxon>
        <taxon>Bacilli</taxon>
        <taxon>Lactobacillales</taxon>
        <taxon>Streptococcaceae</taxon>
        <taxon>Streptococcus</taxon>
    </lineage>
</organism>
<feature type="chain" id="PRO_0000179808" description="Putative N-acetylmannosamine-6-phosphate 2-epimerase 2">
    <location>
        <begin position="1"/>
        <end position="232"/>
    </location>
</feature>
<gene>
    <name type="primary">nanE2</name>
    <name type="ordered locus">spr1529</name>
</gene>
<sequence>MPQISKEALIEQIKDGIIVSCQALPHEPLYTEAGGVIPLLVKAAEQGGAVGIRANSVRDIKEIKEVTKLPIIGIIKRDYPPQEPFITATMKEVDELAELDIEVIALDCTKRERYDGLEIQEFIRQVKEKYPNQLLMADTSIFEEGLAAVEAGIDFVGTTLSGYTSYSPKVDGPDFELIKKLCDAGVDVIAEGKIHTPEQAKQILEYGVRGIVVGGAITRPKEITERFVASLK</sequence>
<comment type="function">
    <text evidence="1">Converts N-acetylmannosamine-6-phosphate (ManNAc-6-P) to N-acetylglucosamine-6-phosphate (GlcNAc-6-P).</text>
</comment>
<comment type="catalytic activity">
    <reaction>
        <text>an N-acyl-D-glucosamine 6-phosphate = an N-acyl-D-mannosamine 6-phosphate</text>
        <dbReference type="Rhea" id="RHEA:23932"/>
        <dbReference type="ChEBI" id="CHEBI:57599"/>
        <dbReference type="ChEBI" id="CHEBI:57666"/>
        <dbReference type="EC" id="5.1.3.9"/>
    </reaction>
</comment>
<comment type="pathway">
    <text>Amino-sugar metabolism; N-acetylneuraminate degradation; D-fructose 6-phosphate from N-acetylneuraminate: step 3/5.</text>
</comment>
<comment type="similarity">
    <text evidence="1">Belongs to the NanE family.</text>
</comment>
<evidence type="ECO:0000305" key="1"/>
<keyword id="KW-0119">Carbohydrate metabolism</keyword>
<keyword id="KW-0413">Isomerase</keyword>
<keyword id="KW-1185">Reference proteome</keyword>
<protein>
    <recommendedName>
        <fullName>Putative N-acetylmannosamine-6-phosphate 2-epimerase 2</fullName>
        <ecNumber>5.1.3.9</ecNumber>
    </recommendedName>
    <alternativeName>
        <fullName>ManNAc-6-P epimerase 2</fullName>
    </alternativeName>
</protein>
<name>NANE2_STRR6</name>
<proteinExistence type="inferred from homology"/>
<reference key="1">
    <citation type="journal article" date="2001" name="J. Bacteriol.">
        <title>Genome of the bacterium Streptococcus pneumoniae strain R6.</title>
        <authorList>
            <person name="Hoskins J."/>
            <person name="Alborn W.E. Jr."/>
            <person name="Arnold J."/>
            <person name="Blaszczak L.C."/>
            <person name="Burgett S."/>
            <person name="DeHoff B.S."/>
            <person name="Estrem S.T."/>
            <person name="Fritz L."/>
            <person name="Fu D.-J."/>
            <person name="Fuller W."/>
            <person name="Geringer C."/>
            <person name="Gilmour R."/>
            <person name="Glass J.S."/>
            <person name="Khoja H."/>
            <person name="Kraft A.R."/>
            <person name="Lagace R.E."/>
            <person name="LeBlanc D.J."/>
            <person name="Lee L.N."/>
            <person name="Lefkowitz E.J."/>
            <person name="Lu J."/>
            <person name="Matsushima P."/>
            <person name="McAhren S.M."/>
            <person name="McHenney M."/>
            <person name="McLeaster K."/>
            <person name="Mundy C.W."/>
            <person name="Nicas T.I."/>
            <person name="Norris F.H."/>
            <person name="O'Gara M."/>
            <person name="Peery R.B."/>
            <person name="Robertson G.T."/>
            <person name="Rockey P."/>
            <person name="Sun P.-M."/>
            <person name="Winkler M.E."/>
            <person name="Yang Y."/>
            <person name="Young-Bellido M."/>
            <person name="Zhao G."/>
            <person name="Zook C.A."/>
            <person name="Baltz R.H."/>
            <person name="Jaskunas S.R."/>
            <person name="Rosteck P.R. Jr."/>
            <person name="Skatrud P.L."/>
            <person name="Glass J.I."/>
        </authorList>
    </citation>
    <scope>NUCLEOTIDE SEQUENCE [LARGE SCALE GENOMIC DNA]</scope>
    <source>
        <strain>ATCC BAA-255 / R6</strain>
    </source>
</reference>
<accession>P65521</accession>
<accession>Q8DNU6</accession>
<accession>Q97PE4</accession>
<dbReference type="EC" id="5.1.3.9"/>
<dbReference type="EMBL" id="AE007317">
    <property type="protein sequence ID" value="AAL00333.1"/>
    <property type="molecule type" value="Genomic_DNA"/>
</dbReference>
<dbReference type="PIR" id="H98062">
    <property type="entry name" value="H98062"/>
</dbReference>
<dbReference type="RefSeq" id="NP_359122.1">
    <property type="nucleotide sequence ID" value="NC_003098.1"/>
</dbReference>
<dbReference type="RefSeq" id="WP_001135651.1">
    <property type="nucleotide sequence ID" value="NC_003098.1"/>
</dbReference>
<dbReference type="SMR" id="P65521"/>
<dbReference type="STRING" id="171101.spr1529"/>
<dbReference type="KEGG" id="spr:spr1529"/>
<dbReference type="PATRIC" id="fig|171101.6.peg.1649"/>
<dbReference type="eggNOG" id="COG3010">
    <property type="taxonomic scope" value="Bacteria"/>
</dbReference>
<dbReference type="HOGENOM" id="CLU_086300_1_0_9"/>
<dbReference type="UniPathway" id="UPA00629">
    <property type="reaction ID" value="UER00682"/>
</dbReference>
<dbReference type="Proteomes" id="UP000000586">
    <property type="component" value="Chromosome"/>
</dbReference>
<dbReference type="GO" id="GO:0005829">
    <property type="term" value="C:cytosol"/>
    <property type="evidence" value="ECO:0000318"/>
    <property type="project" value="GO_Central"/>
</dbReference>
<dbReference type="GO" id="GO:0047465">
    <property type="term" value="F:N-acylglucosamine-6-phosphate 2-epimerase activity"/>
    <property type="evidence" value="ECO:0007669"/>
    <property type="project" value="UniProtKB-EC"/>
</dbReference>
<dbReference type="GO" id="GO:0005975">
    <property type="term" value="P:carbohydrate metabolic process"/>
    <property type="evidence" value="ECO:0007669"/>
    <property type="project" value="UniProtKB-UniRule"/>
</dbReference>
<dbReference type="GO" id="GO:0006053">
    <property type="term" value="P:N-acetylmannosamine catabolic process"/>
    <property type="evidence" value="ECO:0000318"/>
    <property type="project" value="GO_Central"/>
</dbReference>
<dbReference type="GO" id="GO:0019262">
    <property type="term" value="P:N-acetylneuraminate catabolic process"/>
    <property type="evidence" value="ECO:0000318"/>
    <property type="project" value="GO_Central"/>
</dbReference>
<dbReference type="CDD" id="cd04729">
    <property type="entry name" value="NanE"/>
    <property type="match status" value="1"/>
</dbReference>
<dbReference type="FunFam" id="3.20.20.70:FF:000035">
    <property type="entry name" value="Putative N-acetylmannosamine-6-phosphate 2-epimerase"/>
    <property type="match status" value="1"/>
</dbReference>
<dbReference type="Gene3D" id="3.20.20.70">
    <property type="entry name" value="Aldolase class I"/>
    <property type="match status" value="1"/>
</dbReference>
<dbReference type="HAMAP" id="MF_01235">
    <property type="entry name" value="ManNAc6P_epimer"/>
    <property type="match status" value="1"/>
</dbReference>
<dbReference type="InterPro" id="IPR013785">
    <property type="entry name" value="Aldolase_TIM"/>
</dbReference>
<dbReference type="InterPro" id="IPR007260">
    <property type="entry name" value="NanE"/>
</dbReference>
<dbReference type="InterPro" id="IPR011060">
    <property type="entry name" value="RibuloseP-bd_barrel"/>
</dbReference>
<dbReference type="NCBIfam" id="NF002231">
    <property type="entry name" value="PRK01130.1"/>
    <property type="match status" value="1"/>
</dbReference>
<dbReference type="PANTHER" id="PTHR36204">
    <property type="entry name" value="N-ACETYLMANNOSAMINE-6-PHOSPHATE 2-EPIMERASE-RELATED"/>
    <property type="match status" value="1"/>
</dbReference>
<dbReference type="PANTHER" id="PTHR36204:SF1">
    <property type="entry name" value="N-ACETYLMANNOSAMINE-6-PHOSPHATE 2-EPIMERASE-RELATED"/>
    <property type="match status" value="1"/>
</dbReference>
<dbReference type="Pfam" id="PF04131">
    <property type="entry name" value="NanE"/>
    <property type="match status" value="1"/>
</dbReference>
<dbReference type="SUPFAM" id="SSF51366">
    <property type="entry name" value="Ribulose-phoshate binding barrel"/>
    <property type="match status" value="1"/>
</dbReference>